<accession>P33347</accession>
<accession>Q2EES5</accession>
<accession>Q2MAW2</accession>
<sequence length="105" mass="12603">MIVQKELVAIYDYEVPVPEDPFSFRLEIHKCSELFTGSVYRLERFRLRPTFHQRDREDADPLINDALIYIRDECIDERKLRGESPETVIAIFNRELQNIFNQEIE</sequence>
<keyword id="KW-1185">Reference proteome</keyword>
<reference key="1">
    <citation type="submission" date="1993-10" db="EMBL/GenBank/DDBJ databases">
        <title>Automated multiplex sequencing of the E.coli genome.</title>
        <authorList>
            <person name="Richterich P."/>
            <person name="Lakey N."/>
            <person name="Gryan G."/>
            <person name="Jaehn L."/>
            <person name="Mintz L."/>
            <person name="Robison K."/>
            <person name="Church G.M."/>
        </authorList>
    </citation>
    <scope>NUCLEOTIDE SEQUENCE [LARGE SCALE GENOMIC DNA]</scope>
    <source>
        <strain>K12 / BHB2600</strain>
    </source>
</reference>
<reference key="2">
    <citation type="journal article" date="1997" name="Science">
        <title>The complete genome sequence of Escherichia coli K-12.</title>
        <authorList>
            <person name="Blattner F.R."/>
            <person name="Plunkett G. III"/>
            <person name="Bloch C.A."/>
            <person name="Perna N.T."/>
            <person name="Burland V."/>
            <person name="Riley M."/>
            <person name="Collado-Vides J."/>
            <person name="Glasner J.D."/>
            <person name="Rode C.K."/>
            <person name="Mayhew G.F."/>
            <person name="Gregor J."/>
            <person name="Davis N.W."/>
            <person name="Kirkpatrick H.A."/>
            <person name="Goeden M.A."/>
            <person name="Rose D.J."/>
            <person name="Mau B."/>
            <person name="Shao Y."/>
        </authorList>
    </citation>
    <scope>NUCLEOTIDE SEQUENCE [LARGE SCALE GENOMIC DNA]</scope>
    <source>
        <strain>K12 / MG1655 / ATCC 47076</strain>
    </source>
</reference>
<reference key="3">
    <citation type="journal article" date="2006" name="Mol. Syst. Biol.">
        <title>Highly accurate genome sequences of Escherichia coli K-12 strains MG1655 and W3110.</title>
        <authorList>
            <person name="Hayashi K."/>
            <person name="Morooka N."/>
            <person name="Yamamoto Y."/>
            <person name="Fujita K."/>
            <person name="Isono K."/>
            <person name="Choi S."/>
            <person name="Ohtsubo E."/>
            <person name="Baba T."/>
            <person name="Wanner B.L."/>
            <person name="Mori H."/>
            <person name="Horiuchi T."/>
        </authorList>
    </citation>
    <scope>NUCLEOTIDE SEQUENCE [LARGE SCALE GENOMIC DNA]</scope>
    <source>
        <strain>K12 / W3110 / ATCC 27325 / DSM 5911</strain>
    </source>
</reference>
<organism>
    <name type="scientific">Escherichia coli (strain K12)</name>
    <dbReference type="NCBI Taxonomy" id="83333"/>
    <lineage>
        <taxon>Bacteria</taxon>
        <taxon>Pseudomonadati</taxon>
        <taxon>Pseudomonadota</taxon>
        <taxon>Gammaproteobacteria</taxon>
        <taxon>Enterobacterales</taxon>
        <taxon>Enterobacteriaceae</taxon>
        <taxon>Escherichia</taxon>
    </lineage>
</organism>
<proteinExistence type="predicted"/>
<protein>
    <recommendedName>
        <fullName>Uncharacterized protein YehK</fullName>
    </recommendedName>
</protein>
<name>YEHK_ECOLI</name>
<dbReference type="EMBL" id="U00007">
    <property type="protein sequence ID" value="AAA60479.1"/>
    <property type="molecule type" value="Genomic_DNA"/>
</dbReference>
<dbReference type="EMBL" id="U00096">
    <property type="protein sequence ID" value="ABD18687.1"/>
    <property type="molecule type" value="Genomic_DNA"/>
</dbReference>
<dbReference type="EMBL" id="AP009048">
    <property type="protein sequence ID" value="BAE76594.1"/>
    <property type="molecule type" value="Genomic_DNA"/>
</dbReference>
<dbReference type="RefSeq" id="WP_000636925.1">
    <property type="nucleotide sequence ID" value="NZ_STEB01000002.1"/>
</dbReference>
<dbReference type="RefSeq" id="YP_588459.1">
    <property type="nucleotide sequence ID" value="NC_000913.3"/>
</dbReference>
<dbReference type="SMR" id="P33347"/>
<dbReference type="BioGRID" id="4260439">
    <property type="interactions" value="13"/>
</dbReference>
<dbReference type="FunCoup" id="P33347">
    <property type="interactions" value="6"/>
</dbReference>
<dbReference type="IntAct" id="P33347">
    <property type="interactions" value="4"/>
</dbReference>
<dbReference type="STRING" id="511145.b4541"/>
<dbReference type="PaxDb" id="511145-b4541"/>
<dbReference type="EnsemblBacteria" id="ABD18687">
    <property type="protein sequence ID" value="ABD18687"/>
    <property type="gene ID" value="b4541"/>
</dbReference>
<dbReference type="GeneID" id="4056035"/>
<dbReference type="KEGG" id="ecj:JW2106"/>
<dbReference type="KEGG" id="eco:b4541"/>
<dbReference type="KEGG" id="ecoc:C3026_11880"/>
<dbReference type="PATRIC" id="fig|511145.12.peg.2196"/>
<dbReference type="EchoBASE" id="EB1937"/>
<dbReference type="eggNOG" id="ENOG5033Y6A">
    <property type="taxonomic scope" value="Bacteria"/>
</dbReference>
<dbReference type="HOGENOM" id="CLU_2081218_0_0_6"/>
<dbReference type="InParanoid" id="P33347"/>
<dbReference type="OMA" id="VIFNCEL"/>
<dbReference type="OrthoDB" id="6570622at2"/>
<dbReference type="BioCyc" id="EcoCyc:MONOMER0-2680"/>
<dbReference type="PRO" id="PR:P33347"/>
<dbReference type="Proteomes" id="UP000000625">
    <property type="component" value="Chromosome"/>
</dbReference>
<feature type="chain" id="PRO_0000169132" description="Uncharacterized protein YehK">
    <location>
        <begin position="1"/>
        <end position="105"/>
    </location>
</feature>
<gene>
    <name type="primary">yehK</name>
    <name type="ordered locus">b4541</name>
    <name type="ordered locus">JW2106</name>
</gene>